<feature type="chain" id="PRO_0000137697" description="Small ribosomal subunit protein eS31">
    <location>
        <begin position="1"/>
        <end position="67"/>
    </location>
</feature>
<feature type="zinc finger region" description="C4-type" evidence="1">
    <location>
        <begin position="31"/>
        <end position="52"/>
    </location>
</feature>
<feature type="binding site" evidence="1">
    <location>
        <position position="31"/>
    </location>
    <ligand>
        <name>Zn(2+)</name>
        <dbReference type="ChEBI" id="CHEBI:29105"/>
    </ligand>
</feature>
<feature type="binding site" evidence="1">
    <location>
        <position position="34"/>
    </location>
    <ligand>
        <name>Zn(2+)</name>
        <dbReference type="ChEBI" id="CHEBI:29105"/>
    </ligand>
</feature>
<feature type="binding site" evidence="1">
    <location>
        <position position="49"/>
    </location>
    <ligand>
        <name>Zn(2+)</name>
        <dbReference type="ChEBI" id="CHEBI:29105"/>
    </ligand>
</feature>
<feature type="binding site" evidence="1">
    <location>
        <position position="52"/>
    </location>
    <ligand>
        <name>Zn(2+)</name>
        <dbReference type="ChEBI" id="CHEBI:29105"/>
    </ligand>
</feature>
<organism>
    <name type="scientific">Methanococcus maripaludis (strain DSM 14266 / JCM 13030 / NBRC 101832 / S2 / LL)</name>
    <dbReference type="NCBI Taxonomy" id="267377"/>
    <lineage>
        <taxon>Archaea</taxon>
        <taxon>Methanobacteriati</taxon>
        <taxon>Methanobacteriota</taxon>
        <taxon>Methanomada group</taxon>
        <taxon>Methanococci</taxon>
        <taxon>Methanococcales</taxon>
        <taxon>Methanococcaceae</taxon>
        <taxon>Methanococcus</taxon>
    </lineage>
</organism>
<comment type="cofactor">
    <cofactor evidence="1">
        <name>Zn(2+)</name>
        <dbReference type="ChEBI" id="CHEBI:29105"/>
    </cofactor>
    <text evidence="1">Binds 1 zinc ion per subunit.</text>
</comment>
<comment type="subunit">
    <text evidence="1">Part of the 30S ribosomal subunit.</text>
</comment>
<comment type="similarity">
    <text evidence="1">Belongs to the eukaryotic ribosomal protein eS31 family.</text>
</comment>
<proteinExistence type="inferred from homology"/>
<sequence>MAAKKGAKTSTKKSDYYKVEGNTVERLKKVCPKCGAGVFMAEHLNRFACGKCGYMEYKKNEKTESEE</sequence>
<reference key="1">
    <citation type="journal article" date="2004" name="J. Bacteriol.">
        <title>Complete genome sequence of the genetically tractable hydrogenotrophic methanogen Methanococcus maripaludis.</title>
        <authorList>
            <person name="Hendrickson E.L."/>
            <person name="Kaul R."/>
            <person name="Zhou Y."/>
            <person name="Bovee D."/>
            <person name="Chapman P."/>
            <person name="Chung J."/>
            <person name="Conway de Macario E."/>
            <person name="Dodsworth J.A."/>
            <person name="Gillett W."/>
            <person name="Graham D.E."/>
            <person name="Hackett M."/>
            <person name="Haydock A.K."/>
            <person name="Kang A."/>
            <person name="Land M.L."/>
            <person name="Levy R."/>
            <person name="Lie T.J."/>
            <person name="Major T.A."/>
            <person name="Moore B.C."/>
            <person name="Porat I."/>
            <person name="Palmeiri A."/>
            <person name="Rouse G."/>
            <person name="Saenphimmachak C."/>
            <person name="Soell D."/>
            <person name="Van Dien S."/>
            <person name="Wang T."/>
            <person name="Whitman W.B."/>
            <person name="Xia Q."/>
            <person name="Zhang Y."/>
            <person name="Larimer F.W."/>
            <person name="Olson M.V."/>
            <person name="Leigh J.A."/>
        </authorList>
    </citation>
    <scope>NUCLEOTIDE SEQUENCE [LARGE SCALE GENOMIC DNA]</scope>
    <source>
        <strain>DSM 14266 / JCM 13030 / NBRC 101832 / S2 / LL</strain>
    </source>
</reference>
<name>RS27A_METMP</name>
<keyword id="KW-0479">Metal-binding</keyword>
<keyword id="KW-1185">Reference proteome</keyword>
<keyword id="KW-0687">Ribonucleoprotein</keyword>
<keyword id="KW-0689">Ribosomal protein</keyword>
<keyword id="KW-0862">Zinc</keyword>
<keyword id="KW-0863">Zinc-finger</keyword>
<dbReference type="EMBL" id="BX950229">
    <property type="protein sequence ID" value="CAF30000.1"/>
    <property type="molecule type" value="Genomic_DNA"/>
</dbReference>
<dbReference type="RefSeq" id="WP_011170388.1">
    <property type="nucleotide sequence ID" value="NC_005791.1"/>
</dbReference>
<dbReference type="SMR" id="Q6M029"/>
<dbReference type="STRING" id="267377.MMP0444"/>
<dbReference type="EnsemblBacteria" id="CAF30000">
    <property type="protein sequence ID" value="CAF30000"/>
    <property type="gene ID" value="MMP0444"/>
</dbReference>
<dbReference type="KEGG" id="mmp:MMP0444"/>
<dbReference type="PATRIC" id="fig|267377.15.peg.448"/>
<dbReference type="eggNOG" id="arCOG04183">
    <property type="taxonomic scope" value="Archaea"/>
</dbReference>
<dbReference type="HOGENOM" id="CLU_179743_2_0_2"/>
<dbReference type="OrthoDB" id="25142at2157"/>
<dbReference type="Proteomes" id="UP000000590">
    <property type="component" value="Chromosome"/>
</dbReference>
<dbReference type="GO" id="GO:1990904">
    <property type="term" value="C:ribonucleoprotein complex"/>
    <property type="evidence" value="ECO:0007669"/>
    <property type="project" value="UniProtKB-KW"/>
</dbReference>
<dbReference type="GO" id="GO:0005840">
    <property type="term" value="C:ribosome"/>
    <property type="evidence" value="ECO:0007669"/>
    <property type="project" value="UniProtKB-KW"/>
</dbReference>
<dbReference type="GO" id="GO:0003735">
    <property type="term" value="F:structural constituent of ribosome"/>
    <property type="evidence" value="ECO:0007669"/>
    <property type="project" value="InterPro"/>
</dbReference>
<dbReference type="GO" id="GO:0008270">
    <property type="term" value="F:zinc ion binding"/>
    <property type="evidence" value="ECO:0007669"/>
    <property type="project" value="UniProtKB-UniRule"/>
</dbReference>
<dbReference type="GO" id="GO:0006412">
    <property type="term" value="P:translation"/>
    <property type="evidence" value="ECO:0007669"/>
    <property type="project" value="UniProtKB-UniRule"/>
</dbReference>
<dbReference type="Gene3D" id="6.20.50.180">
    <property type="match status" value="1"/>
</dbReference>
<dbReference type="HAMAP" id="MF_00777">
    <property type="entry name" value="Ribosomal_eS31"/>
    <property type="match status" value="1"/>
</dbReference>
<dbReference type="InterPro" id="IPR002906">
    <property type="entry name" value="Ribosomal_eS31"/>
</dbReference>
<dbReference type="InterPro" id="IPR022845">
    <property type="entry name" value="Ribosomal_eS31_arc"/>
</dbReference>
<dbReference type="InterPro" id="IPR011332">
    <property type="entry name" value="Ribosomal_zn-bd"/>
</dbReference>
<dbReference type="NCBIfam" id="NF001669">
    <property type="entry name" value="PRK00432.1"/>
    <property type="match status" value="1"/>
</dbReference>
<dbReference type="Pfam" id="PF01599">
    <property type="entry name" value="Ribosomal_S27"/>
    <property type="match status" value="1"/>
</dbReference>
<dbReference type="SMART" id="SM01402">
    <property type="entry name" value="Ribosomal_S27"/>
    <property type="match status" value="1"/>
</dbReference>
<dbReference type="SUPFAM" id="SSF57829">
    <property type="entry name" value="Zn-binding ribosomal proteins"/>
    <property type="match status" value="1"/>
</dbReference>
<accession>Q6M029</accession>
<evidence type="ECO:0000255" key="1">
    <source>
        <dbReference type="HAMAP-Rule" id="MF_00777"/>
    </source>
</evidence>
<evidence type="ECO:0000305" key="2"/>
<gene>
    <name evidence="1" type="primary">rps27ae</name>
    <name type="ordered locus">MMP0444</name>
</gene>
<protein>
    <recommendedName>
        <fullName evidence="1">Small ribosomal subunit protein eS31</fullName>
    </recommendedName>
    <alternativeName>
        <fullName evidence="2">30S ribosomal protein S27ae</fullName>
    </alternativeName>
</protein>